<name>RS6_BORT9</name>
<accession>A1QYR4</accession>
<gene>
    <name evidence="1" type="primary">rpsF</name>
    <name type="ordered locus">BT0115</name>
</gene>
<organism>
    <name type="scientific">Borrelia turicatae (strain 91E135)</name>
    <dbReference type="NCBI Taxonomy" id="314724"/>
    <lineage>
        <taxon>Bacteria</taxon>
        <taxon>Pseudomonadati</taxon>
        <taxon>Spirochaetota</taxon>
        <taxon>Spirochaetia</taxon>
        <taxon>Spirochaetales</taxon>
        <taxon>Borreliaceae</taxon>
        <taxon>Borrelia</taxon>
    </lineage>
</organism>
<proteinExistence type="inferred from homology"/>
<protein>
    <recommendedName>
        <fullName evidence="1">Small ribosomal subunit protein bS6</fullName>
    </recommendedName>
    <alternativeName>
        <fullName evidence="2">30S ribosomal protein S6</fullName>
    </alternativeName>
</protein>
<dbReference type="EMBL" id="CP000049">
    <property type="protein sequence ID" value="AAX17456.1"/>
    <property type="molecule type" value="Genomic_DNA"/>
</dbReference>
<dbReference type="RefSeq" id="WP_011772075.1">
    <property type="nucleotide sequence ID" value="NZ_CP073176.1"/>
</dbReference>
<dbReference type="SMR" id="A1QYR4"/>
<dbReference type="KEGG" id="btu:BT0115"/>
<dbReference type="eggNOG" id="COG0360">
    <property type="taxonomic scope" value="Bacteria"/>
</dbReference>
<dbReference type="HOGENOM" id="CLU_1902635_0_0_12"/>
<dbReference type="Proteomes" id="UP000001205">
    <property type="component" value="Chromosome"/>
</dbReference>
<dbReference type="GO" id="GO:1990904">
    <property type="term" value="C:ribonucleoprotein complex"/>
    <property type="evidence" value="ECO:0007669"/>
    <property type="project" value="UniProtKB-KW"/>
</dbReference>
<dbReference type="GO" id="GO:0005840">
    <property type="term" value="C:ribosome"/>
    <property type="evidence" value="ECO:0007669"/>
    <property type="project" value="UniProtKB-KW"/>
</dbReference>
<dbReference type="GO" id="GO:0019843">
    <property type="term" value="F:rRNA binding"/>
    <property type="evidence" value="ECO:0007669"/>
    <property type="project" value="UniProtKB-UniRule"/>
</dbReference>
<dbReference type="GO" id="GO:0003735">
    <property type="term" value="F:structural constituent of ribosome"/>
    <property type="evidence" value="ECO:0007669"/>
    <property type="project" value="InterPro"/>
</dbReference>
<dbReference type="GO" id="GO:0006412">
    <property type="term" value="P:translation"/>
    <property type="evidence" value="ECO:0007669"/>
    <property type="project" value="UniProtKB-UniRule"/>
</dbReference>
<dbReference type="CDD" id="cd00473">
    <property type="entry name" value="bS6"/>
    <property type="match status" value="1"/>
</dbReference>
<dbReference type="Gene3D" id="3.30.70.60">
    <property type="match status" value="1"/>
</dbReference>
<dbReference type="HAMAP" id="MF_00360">
    <property type="entry name" value="Ribosomal_bS6"/>
    <property type="match status" value="1"/>
</dbReference>
<dbReference type="InterPro" id="IPR000529">
    <property type="entry name" value="Ribosomal_bS6"/>
</dbReference>
<dbReference type="InterPro" id="IPR035980">
    <property type="entry name" value="Ribosomal_bS6_sf"/>
</dbReference>
<dbReference type="InterPro" id="IPR020814">
    <property type="entry name" value="Ribosomal_S6_plastid/chlpt"/>
</dbReference>
<dbReference type="InterPro" id="IPR014717">
    <property type="entry name" value="Transl_elong_EF1B/ribsomal_bS6"/>
</dbReference>
<dbReference type="NCBIfam" id="TIGR00166">
    <property type="entry name" value="S6"/>
    <property type="match status" value="1"/>
</dbReference>
<dbReference type="Pfam" id="PF01250">
    <property type="entry name" value="Ribosomal_S6"/>
    <property type="match status" value="1"/>
</dbReference>
<dbReference type="SUPFAM" id="SSF54995">
    <property type="entry name" value="Ribosomal protein S6"/>
    <property type="match status" value="1"/>
</dbReference>
<sequence>MIKKYEACFLFKSEELEYKAALEEVKKQLTVFNASDFAENSLGERALEYPIRKQLRGRYEIIEFKMDSENLKELEIQLKLIKNLLRHMILVKINKKVSVKKVKRRNFREFKDNRDIKEKESSEFNSNVDVKVD</sequence>
<evidence type="ECO:0000255" key="1">
    <source>
        <dbReference type="HAMAP-Rule" id="MF_00360"/>
    </source>
</evidence>
<evidence type="ECO:0000305" key="2"/>
<reference key="1">
    <citation type="submission" date="2004-12" db="EMBL/GenBank/DDBJ databases">
        <title>The genome sequence of Borrelia hermsii and Borrelia turicatae: comparative analysis of two agents of endemic N. America relapsing fever.</title>
        <authorList>
            <person name="Porcella S.F."/>
            <person name="Raffel S.J."/>
            <person name="Schrumpf M.E."/>
            <person name="Montgomery B."/>
            <person name="Smith T."/>
            <person name="Schwan T.G."/>
        </authorList>
    </citation>
    <scope>NUCLEOTIDE SEQUENCE [LARGE SCALE GENOMIC DNA]</scope>
    <source>
        <strain>91E135</strain>
    </source>
</reference>
<feature type="chain" id="PRO_1000133511" description="Small ribosomal subunit protein bS6">
    <location>
        <begin position="1"/>
        <end position="133"/>
    </location>
</feature>
<comment type="function">
    <text evidence="1">Binds together with bS18 to 16S ribosomal RNA.</text>
</comment>
<comment type="similarity">
    <text evidence="1">Belongs to the bacterial ribosomal protein bS6 family.</text>
</comment>
<keyword id="KW-1185">Reference proteome</keyword>
<keyword id="KW-0687">Ribonucleoprotein</keyword>
<keyword id="KW-0689">Ribosomal protein</keyword>
<keyword id="KW-0694">RNA-binding</keyword>
<keyword id="KW-0699">rRNA-binding</keyword>